<proteinExistence type="inferred from homology"/>
<feature type="signal peptide" evidence="2">
    <location>
        <begin position="1"/>
        <end position="19"/>
    </location>
</feature>
<feature type="propeptide" id="PRO_0000407158" evidence="1">
    <location>
        <begin position="20"/>
        <end position="244"/>
    </location>
</feature>
<feature type="chain" id="PRO_0000407159" description="Extracellular metalloproteinase 2">
    <location>
        <begin position="245"/>
        <end position="632"/>
    </location>
</feature>
<feature type="active site" evidence="3">
    <location>
        <position position="430"/>
    </location>
</feature>
<feature type="binding site" evidence="3">
    <location>
        <position position="429"/>
    </location>
    <ligand>
        <name>Zn(2+)</name>
        <dbReference type="ChEBI" id="CHEBI:29105"/>
        <note>catalytic</note>
    </ligand>
</feature>
<feature type="binding site" evidence="3">
    <location>
        <position position="433"/>
    </location>
    <ligand>
        <name>Zn(2+)</name>
        <dbReference type="ChEBI" id="CHEBI:29105"/>
        <note>catalytic</note>
    </ligand>
</feature>
<feature type="glycosylation site" description="N-linked (GlcNAc...) asparagine" evidence="2">
    <location>
        <position position="270"/>
    </location>
</feature>
<gene>
    <name type="primary">MEP2</name>
    <name type="ORF">MGYG_02992</name>
</gene>
<dbReference type="EC" id="3.4.24.-"/>
<dbReference type="EMBL" id="DS989823">
    <property type="protein sequence ID" value="EFQ99984.1"/>
    <property type="molecule type" value="Genomic_DNA"/>
</dbReference>
<dbReference type="RefSeq" id="XP_003175467.1">
    <property type="nucleotide sequence ID" value="XM_003175419.1"/>
</dbReference>
<dbReference type="SMR" id="E4UQ65"/>
<dbReference type="MEROPS" id="M36.001"/>
<dbReference type="GlyCosmos" id="E4UQ65">
    <property type="glycosylation" value="1 site, No reported glycans"/>
</dbReference>
<dbReference type="GeneID" id="10030775"/>
<dbReference type="VEuPathDB" id="FungiDB:MGYG_02992"/>
<dbReference type="eggNOG" id="ENOG502QTDC">
    <property type="taxonomic scope" value="Eukaryota"/>
</dbReference>
<dbReference type="HOGENOM" id="CLU_012703_3_0_1"/>
<dbReference type="InParanoid" id="E4UQ65"/>
<dbReference type="OMA" id="NDFAICN"/>
<dbReference type="OrthoDB" id="3227768at2759"/>
<dbReference type="Proteomes" id="UP000002669">
    <property type="component" value="Unassembled WGS sequence"/>
</dbReference>
<dbReference type="GO" id="GO:0005576">
    <property type="term" value="C:extracellular region"/>
    <property type="evidence" value="ECO:0007669"/>
    <property type="project" value="UniProtKB-SubCell"/>
</dbReference>
<dbReference type="GO" id="GO:0004222">
    <property type="term" value="F:metalloendopeptidase activity"/>
    <property type="evidence" value="ECO:0007669"/>
    <property type="project" value="InterPro"/>
</dbReference>
<dbReference type="GO" id="GO:0008270">
    <property type="term" value="F:zinc ion binding"/>
    <property type="evidence" value="ECO:0007669"/>
    <property type="project" value="InterPro"/>
</dbReference>
<dbReference type="GO" id="GO:0006508">
    <property type="term" value="P:proteolysis"/>
    <property type="evidence" value="ECO:0007669"/>
    <property type="project" value="UniProtKB-KW"/>
</dbReference>
<dbReference type="CDD" id="cd09596">
    <property type="entry name" value="M36"/>
    <property type="match status" value="1"/>
</dbReference>
<dbReference type="Gene3D" id="3.10.170.10">
    <property type="match status" value="1"/>
</dbReference>
<dbReference type="Gene3D" id="1.10.390.10">
    <property type="entry name" value="Neutral Protease Domain 2"/>
    <property type="match status" value="1"/>
</dbReference>
<dbReference type="InterPro" id="IPR011096">
    <property type="entry name" value="FTP_domain"/>
</dbReference>
<dbReference type="InterPro" id="IPR050371">
    <property type="entry name" value="Fungal_virulence_M36"/>
</dbReference>
<dbReference type="InterPro" id="IPR001842">
    <property type="entry name" value="Peptidase_M36"/>
</dbReference>
<dbReference type="InterPro" id="IPR027268">
    <property type="entry name" value="Peptidase_M4/M1_CTD_sf"/>
</dbReference>
<dbReference type="PANTHER" id="PTHR33478">
    <property type="entry name" value="EXTRACELLULAR METALLOPROTEINASE MEP"/>
    <property type="match status" value="1"/>
</dbReference>
<dbReference type="PANTHER" id="PTHR33478:SF1">
    <property type="entry name" value="EXTRACELLULAR METALLOPROTEINASE MEP"/>
    <property type="match status" value="1"/>
</dbReference>
<dbReference type="Pfam" id="PF07504">
    <property type="entry name" value="FTP"/>
    <property type="match status" value="1"/>
</dbReference>
<dbReference type="Pfam" id="PF02128">
    <property type="entry name" value="Peptidase_M36"/>
    <property type="match status" value="1"/>
</dbReference>
<dbReference type="PRINTS" id="PR00999">
    <property type="entry name" value="FUNGALYSIN"/>
</dbReference>
<dbReference type="SUPFAM" id="SSF55486">
    <property type="entry name" value="Metalloproteases ('zincins'), catalytic domain"/>
    <property type="match status" value="1"/>
</dbReference>
<dbReference type="PROSITE" id="PS00142">
    <property type="entry name" value="ZINC_PROTEASE"/>
    <property type="match status" value="1"/>
</dbReference>
<organism>
    <name type="scientific">Arthroderma gypseum (strain ATCC MYA-4604 / CBS 118893)</name>
    <name type="common">Microsporum gypseum</name>
    <dbReference type="NCBI Taxonomy" id="535722"/>
    <lineage>
        <taxon>Eukaryota</taxon>
        <taxon>Fungi</taxon>
        <taxon>Dikarya</taxon>
        <taxon>Ascomycota</taxon>
        <taxon>Pezizomycotina</taxon>
        <taxon>Eurotiomycetes</taxon>
        <taxon>Eurotiomycetidae</taxon>
        <taxon>Onygenales</taxon>
        <taxon>Arthrodermataceae</taxon>
        <taxon>Nannizzia</taxon>
    </lineage>
</organism>
<keyword id="KW-0325">Glycoprotein</keyword>
<keyword id="KW-0378">Hydrolase</keyword>
<keyword id="KW-0479">Metal-binding</keyword>
<keyword id="KW-0482">Metalloprotease</keyword>
<keyword id="KW-0645">Protease</keyword>
<keyword id="KW-1185">Reference proteome</keyword>
<keyword id="KW-0964">Secreted</keyword>
<keyword id="KW-0732">Signal</keyword>
<keyword id="KW-0862">Zinc</keyword>
<keyword id="KW-0865">Zymogen</keyword>
<sequence>MHGLLLAGLAAALPLGVAGLPARQQSGLSPRGIDINAYRFASMAKYSEHKTTSQMVHSFSYSKDDDYVATATKLVKSTFPNMTFRTVKDHYIGTNGIGHVHFKQTAHGIDIDNADFNVNIGRDGKVFTFGNSFFEGEMPKTNPLTKRDFSDPVKALHGAVKTLKIPVKPESAKAMPMKEVETFKFEGTSGALSEPKAKLVYLQKDGNLHLTWRVETDVGDNWLLSYVDAKESETVHNVVDYVASADYKVFAWGLNDPTEGQPTMIKDPWNTTGSGSPFTWHGDGQMDYTVTRGNNVPAQDNPSGGSQWENNYRPESAELSFVYEYSEQMEPEQYKDFAITQLFYTVNTFHDVLYTLGFTEEAGNFQMNNNGKGGQGNDFAICNAQDGSGTNNANFATPPDGQPGRMRMYTWTTAQPSRDGDLEAGIVIHEYTHGLSNRLCGGPANSNCLNELEAGGMGEGWGDFYATAIRLKQGDTHDTDYTMGEWAANQKGGIREYPYSTNMQTNPYTYADVQGMSEVHGIGTVWATILYDVLWNLIDEHGMGKNIMPKFVNGAPTDGRNLAMKLVLDGMTLMPCNPNFMQARDAIIDADQALTNGQNKCALMKAFAKRGLGSNYKHGKNRVNNFDMPAGC</sequence>
<evidence type="ECO:0000250" key="1"/>
<evidence type="ECO:0000255" key="2"/>
<evidence type="ECO:0000255" key="3">
    <source>
        <dbReference type="PROSITE-ProRule" id="PRU10095"/>
    </source>
</evidence>
<evidence type="ECO:0000305" key="4"/>
<name>MEP2_ARTGP</name>
<reference key="1">
    <citation type="journal article" date="2012" name="MBio">
        <title>Comparative genome analysis of Trichophyton rubrum and related dermatophytes reveals candidate genes involved in infection.</title>
        <authorList>
            <person name="Martinez D.A."/>
            <person name="Oliver B.G."/>
            <person name="Graeser Y."/>
            <person name="Goldberg J.M."/>
            <person name="Li W."/>
            <person name="Martinez-Rossi N.M."/>
            <person name="Monod M."/>
            <person name="Shelest E."/>
            <person name="Barton R.C."/>
            <person name="Birch E."/>
            <person name="Brakhage A.A."/>
            <person name="Chen Z."/>
            <person name="Gurr S.J."/>
            <person name="Heiman D."/>
            <person name="Heitman J."/>
            <person name="Kosti I."/>
            <person name="Rossi A."/>
            <person name="Saif S."/>
            <person name="Samalova M."/>
            <person name="Saunders C.W."/>
            <person name="Shea T."/>
            <person name="Summerbell R.C."/>
            <person name="Xu J."/>
            <person name="Young S."/>
            <person name="Zeng Q."/>
            <person name="Birren B.W."/>
            <person name="Cuomo C.A."/>
            <person name="White T.C."/>
        </authorList>
    </citation>
    <scope>NUCLEOTIDE SEQUENCE [LARGE SCALE GENOMIC DNA]</scope>
    <source>
        <strain>ATCC MYA-4604 / CBS 118893</strain>
    </source>
</reference>
<accession>E4UQ65</accession>
<protein>
    <recommendedName>
        <fullName>Extracellular metalloproteinase 2</fullName>
        <ecNumber>3.4.24.-</ecNumber>
    </recommendedName>
    <alternativeName>
        <fullName>Elastinolytic metalloproteinase MEP2</fullName>
    </alternativeName>
    <alternativeName>
        <fullName>Fungalysin MEP2</fullName>
    </alternativeName>
</protein>
<comment type="function">
    <text evidence="1">Secreted metalloproteinase that allows assimilation of proteinaceous substrates and probably acts as a virulence factor.</text>
</comment>
<comment type="cofactor">
    <cofactor evidence="1">
        <name>Zn(2+)</name>
        <dbReference type="ChEBI" id="CHEBI:29105"/>
    </cofactor>
    <text evidence="1">Binds 1 zinc ion per subunit.</text>
</comment>
<comment type="subcellular location">
    <subcellularLocation>
        <location evidence="1">Secreted</location>
    </subcellularLocation>
</comment>
<comment type="similarity">
    <text evidence="4">Belongs to the peptidase M36 family.</text>
</comment>